<evidence type="ECO:0000255" key="1">
    <source>
        <dbReference type="HAMAP-Rule" id="MF_01595"/>
    </source>
</evidence>
<proteinExistence type="inferred from homology"/>
<sequence length="712" mass="78181">MSQEKQVFSIDLAGRQLTVETGQLAKQANGAVLVRYGDTAVLSTATASKEAKNVDFFPLTVNYEERLYAVGKIPGGFIKREGRPSEKAILASRLIDRPIRPLFADGFRNEVQVVSIVMSVDQDCSSEMAAMLGSSLALSISDIPFEGPIAGATVGRINGEFVINPTVEQQEQSDIHLVVAGTKDAINMVEAGADQVPEETMLEAIMFGHDEIKRLIAFQEEIVQAVGKEKSEVKLYEVDADLNQAVREMAEKDMHSAIQVHEKHAREDAINEVKKRVIEHYEAQEADADTLGQVNEILYKIVKEEVRRLITVEKIRPDGRKGDEIRPLASEVGILSRTHGSGLFTRGQTQALSICTLGALGDVQILDGLGVEESKRFMHHYNFPSFSVGETRPMRGPGRREIGHGALGERALEPVIPSEKDFPYTVRLVSEVLESNGSTSQASICGSTLAMMDAGVPLKAPVAGIAMGLVKTGEHYTILSDIQGMEDHLGDMDFKVAGTAHGVTALQMDIKIDGLSREILEEALQQAKVGRVHILNHMLSVIAEPRTELSAYAPKIITMTINPDKIRDVIGPSGKQINKIIEETGVKIDIEQDGTVFISSINQEMNDKAKKIIEDIVREVQVGEIYEGKVKRVEKFGAFVELFSGKDGLVHISELALERVGKVEDVVKIGDVITVKVIEIDKQGRVNLSRKVLLKEEQEKEAAKEENKQEQQ</sequence>
<comment type="function">
    <text evidence="1">Involved in mRNA degradation. Catalyzes the phosphorolysis of single-stranded polyribonucleotides processively in the 3'- to 5'-direction.</text>
</comment>
<comment type="catalytic activity">
    <reaction evidence="1">
        <text>RNA(n+1) + phosphate = RNA(n) + a ribonucleoside 5'-diphosphate</text>
        <dbReference type="Rhea" id="RHEA:22096"/>
        <dbReference type="Rhea" id="RHEA-COMP:14527"/>
        <dbReference type="Rhea" id="RHEA-COMP:17342"/>
        <dbReference type="ChEBI" id="CHEBI:43474"/>
        <dbReference type="ChEBI" id="CHEBI:57930"/>
        <dbReference type="ChEBI" id="CHEBI:140395"/>
        <dbReference type="EC" id="2.7.7.8"/>
    </reaction>
</comment>
<comment type="cofactor">
    <cofactor evidence="1">
        <name>Mg(2+)</name>
        <dbReference type="ChEBI" id="CHEBI:18420"/>
    </cofactor>
</comment>
<comment type="subcellular location">
    <subcellularLocation>
        <location evidence="1">Cytoplasm</location>
    </subcellularLocation>
</comment>
<comment type="similarity">
    <text evidence="1">Belongs to the polyribonucleotide nucleotidyltransferase family.</text>
</comment>
<feature type="chain" id="PRO_0000329521" description="Polyribonucleotide nucleotidyltransferase">
    <location>
        <begin position="1"/>
        <end position="712"/>
    </location>
</feature>
<feature type="domain" description="KH" evidence="1">
    <location>
        <begin position="554"/>
        <end position="613"/>
    </location>
</feature>
<feature type="domain" description="S1 motif" evidence="1">
    <location>
        <begin position="623"/>
        <end position="691"/>
    </location>
</feature>
<feature type="binding site" evidence="1">
    <location>
        <position position="487"/>
    </location>
    <ligand>
        <name>Mg(2+)</name>
        <dbReference type="ChEBI" id="CHEBI:18420"/>
    </ligand>
</feature>
<feature type="binding site" evidence="1">
    <location>
        <position position="493"/>
    </location>
    <ligand>
        <name>Mg(2+)</name>
        <dbReference type="ChEBI" id="CHEBI:18420"/>
    </ligand>
</feature>
<gene>
    <name evidence="1" type="primary">pnp</name>
    <name type="ordered locus">BT9727_3548</name>
</gene>
<keyword id="KW-0963">Cytoplasm</keyword>
<keyword id="KW-0460">Magnesium</keyword>
<keyword id="KW-0479">Metal-binding</keyword>
<keyword id="KW-0548">Nucleotidyltransferase</keyword>
<keyword id="KW-0694">RNA-binding</keyword>
<keyword id="KW-0808">Transferase</keyword>
<protein>
    <recommendedName>
        <fullName evidence="1">Polyribonucleotide nucleotidyltransferase</fullName>
        <ecNumber evidence="1">2.7.7.8</ecNumber>
    </recommendedName>
    <alternativeName>
        <fullName evidence="1">Polynucleotide phosphorylase</fullName>
        <shortName evidence="1">PNPase</shortName>
    </alternativeName>
</protein>
<organism>
    <name type="scientific">Bacillus thuringiensis subsp. konkukian (strain 97-27)</name>
    <dbReference type="NCBI Taxonomy" id="281309"/>
    <lineage>
        <taxon>Bacteria</taxon>
        <taxon>Bacillati</taxon>
        <taxon>Bacillota</taxon>
        <taxon>Bacilli</taxon>
        <taxon>Bacillales</taxon>
        <taxon>Bacillaceae</taxon>
        <taxon>Bacillus</taxon>
        <taxon>Bacillus cereus group</taxon>
    </lineage>
</organism>
<dbReference type="EC" id="2.7.7.8" evidence="1"/>
<dbReference type="EMBL" id="AE017355">
    <property type="protein sequence ID" value="AAT60588.1"/>
    <property type="molecule type" value="Genomic_DNA"/>
</dbReference>
<dbReference type="RefSeq" id="WP_000076750.1">
    <property type="nucleotide sequence ID" value="NC_005957.1"/>
</dbReference>
<dbReference type="RefSeq" id="YP_037868.1">
    <property type="nucleotide sequence ID" value="NC_005957.1"/>
</dbReference>
<dbReference type="SMR" id="Q6HF08"/>
<dbReference type="GeneID" id="93007305"/>
<dbReference type="KEGG" id="btk:BT9727_3548"/>
<dbReference type="PATRIC" id="fig|281309.8.peg.3785"/>
<dbReference type="HOGENOM" id="CLU_004217_2_2_9"/>
<dbReference type="Proteomes" id="UP000001301">
    <property type="component" value="Chromosome"/>
</dbReference>
<dbReference type="GO" id="GO:0005829">
    <property type="term" value="C:cytosol"/>
    <property type="evidence" value="ECO:0007669"/>
    <property type="project" value="TreeGrafter"/>
</dbReference>
<dbReference type="GO" id="GO:0000175">
    <property type="term" value="F:3'-5'-RNA exonuclease activity"/>
    <property type="evidence" value="ECO:0007669"/>
    <property type="project" value="TreeGrafter"/>
</dbReference>
<dbReference type="GO" id="GO:0000287">
    <property type="term" value="F:magnesium ion binding"/>
    <property type="evidence" value="ECO:0007669"/>
    <property type="project" value="UniProtKB-UniRule"/>
</dbReference>
<dbReference type="GO" id="GO:0004654">
    <property type="term" value="F:polyribonucleotide nucleotidyltransferase activity"/>
    <property type="evidence" value="ECO:0007669"/>
    <property type="project" value="UniProtKB-UniRule"/>
</dbReference>
<dbReference type="GO" id="GO:0003723">
    <property type="term" value="F:RNA binding"/>
    <property type="evidence" value="ECO:0007669"/>
    <property type="project" value="UniProtKB-UniRule"/>
</dbReference>
<dbReference type="GO" id="GO:0006402">
    <property type="term" value="P:mRNA catabolic process"/>
    <property type="evidence" value="ECO:0007669"/>
    <property type="project" value="UniProtKB-UniRule"/>
</dbReference>
<dbReference type="GO" id="GO:0006396">
    <property type="term" value="P:RNA processing"/>
    <property type="evidence" value="ECO:0007669"/>
    <property type="project" value="InterPro"/>
</dbReference>
<dbReference type="CDD" id="cd02393">
    <property type="entry name" value="KH-I_PNPase"/>
    <property type="match status" value="1"/>
</dbReference>
<dbReference type="CDD" id="cd11363">
    <property type="entry name" value="RNase_PH_PNPase_1"/>
    <property type="match status" value="1"/>
</dbReference>
<dbReference type="CDD" id="cd11364">
    <property type="entry name" value="RNase_PH_PNPase_2"/>
    <property type="match status" value="1"/>
</dbReference>
<dbReference type="CDD" id="cd04472">
    <property type="entry name" value="S1_PNPase"/>
    <property type="match status" value="1"/>
</dbReference>
<dbReference type="FunFam" id="2.40.50.140:FF:000023">
    <property type="entry name" value="Polyribonucleotide nucleotidyltransferase"/>
    <property type="match status" value="1"/>
</dbReference>
<dbReference type="FunFam" id="3.30.1370.10:FF:000001">
    <property type="entry name" value="Polyribonucleotide nucleotidyltransferase"/>
    <property type="match status" value="1"/>
</dbReference>
<dbReference type="FunFam" id="3.30.230.70:FF:000001">
    <property type="entry name" value="Polyribonucleotide nucleotidyltransferase"/>
    <property type="match status" value="1"/>
</dbReference>
<dbReference type="FunFam" id="3.30.230.70:FF:000002">
    <property type="entry name" value="Polyribonucleotide nucleotidyltransferase"/>
    <property type="match status" value="1"/>
</dbReference>
<dbReference type="Gene3D" id="3.30.230.70">
    <property type="entry name" value="GHMP Kinase, N-terminal domain"/>
    <property type="match status" value="2"/>
</dbReference>
<dbReference type="Gene3D" id="3.30.1370.10">
    <property type="entry name" value="K Homology domain, type 1"/>
    <property type="match status" value="1"/>
</dbReference>
<dbReference type="Gene3D" id="2.40.50.140">
    <property type="entry name" value="Nucleic acid-binding proteins"/>
    <property type="match status" value="1"/>
</dbReference>
<dbReference type="HAMAP" id="MF_01595">
    <property type="entry name" value="PNPase"/>
    <property type="match status" value="1"/>
</dbReference>
<dbReference type="InterPro" id="IPR001247">
    <property type="entry name" value="ExoRNase_PH_dom1"/>
</dbReference>
<dbReference type="InterPro" id="IPR015847">
    <property type="entry name" value="ExoRNase_PH_dom2"/>
</dbReference>
<dbReference type="InterPro" id="IPR036345">
    <property type="entry name" value="ExoRNase_PH_dom2_sf"/>
</dbReference>
<dbReference type="InterPro" id="IPR004087">
    <property type="entry name" value="KH_dom"/>
</dbReference>
<dbReference type="InterPro" id="IPR004088">
    <property type="entry name" value="KH_dom_type_1"/>
</dbReference>
<dbReference type="InterPro" id="IPR036612">
    <property type="entry name" value="KH_dom_type_1_sf"/>
</dbReference>
<dbReference type="InterPro" id="IPR012340">
    <property type="entry name" value="NA-bd_OB-fold"/>
</dbReference>
<dbReference type="InterPro" id="IPR012162">
    <property type="entry name" value="PNPase"/>
</dbReference>
<dbReference type="InterPro" id="IPR027408">
    <property type="entry name" value="PNPase/RNase_PH_dom_sf"/>
</dbReference>
<dbReference type="InterPro" id="IPR015848">
    <property type="entry name" value="PNPase_PH_RNA-bd_bac/org-type"/>
</dbReference>
<dbReference type="InterPro" id="IPR020568">
    <property type="entry name" value="Ribosomal_Su5_D2-typ_SF"/>
</dbReference>
<dbReference type="InterPro" id="IPR003029">
    <property type="entry name" value="S1_domain"/>
</dbReference>
<dbReference type="NCBIfam" id="TIGR03591">
    <property type="entry name" value="polynuc_phos"/>
    <property type="match status" value="1"/>
</dbReference>
<dbReference type="NCBIfam" id="NF008805">
    <property type="entry name" value="PRK11824.1"/>
    <property type="match status" value="1"/>
</dbReference>
<dbReference type="PANTHER" id="PTHR11252">
    <property type="entry name" value="POLYRIBONUCLEOTIDE NUCLEOTIDYLTRANSFERASE"/>
    <property type="match status" value="1"/>
</dbReference>
<dbReference type="PANTHER" id="PTHR11252:SF0">
    <property type="entry name" value="POLYRIBONUCLEOTIDE NUCLEOTIDYLTRANSFERASE 1, MITOCHONDRIAL"/>
    <property type="match status" value="1"/>
</dbReference>
<dbReference type="Pfam" id="PF00013">
    <property type="entry name" value="KH_1"/>
    <property type="match status" value="1"/>
</dbReference>
<dbReference type="Pfam" id="PF03726">
    <property type="entry name" value="PNPase"/>
    <property type="match status" value="1"/>
</dbReference>
<dbReference type="Pfam" id="PF01138">
    <property type="entry name" value="RNase_PH"/>
    <property type="match status" value="2"/>
</dbReference>
<dbReference type="Pfam" id="PF03725">
    <property type="entry name" value="RNase_PH_C"/>
    <property type="match status" value="2"/>
</dbReference>
<dbReference type="Pfam" id="PF00575">
    <property type="entry name" value="S1"/>
    <property type="match status" value="1"/>
</dbReference>
<dbReference type="PIRSF" id="PIRSF005499">
    <property type="entry name" value="PNPase"/>
    <property type="match status" value="1"/>
</dbReference>
<dbReference type="SMART" id="SM00322">
    <property type="entry name" value="KH"/>
    <property type="match status" value="1"/>
</dbReference>
<dbReference type="SMART" id="SM00316">
    <property type="entry name" value="S1"/>
    <property type="match status" value="1"/>
</dbReference>
<dbReference type="SUPFAM" id="SSF54791">
    <property type="entry name" value="Eukaryotic type KH-domain (KH-domain type I)"/>
    <property type="match status" value="1"/>
</dbReference>
<dbReference type="SUPFAM" id="SSF50249">
    <property type="entry name" value="Nucleic acid-binding proteins"/>
    <property type="match status" value="1"/>
</dbReference>
<dbReference type="SUPFAM" id="SSF55666">
    <property type="entry name" value="Ribonuclease PH domain 2-like"/>
    <property type="match status" value="2"/>
</dbReference>
<dbReference type="SUPFAM" id="SSF54211">
    <property type="entry name" value="Ribosomal protein S5 domain 2-like"/>
    <property type="match status" value="2"/>
</dbReference>
<dbReference type="PROSITE" id="PS50084">
    <property type="entry name" value="KH_TYPE_1"/>
    <property type="match status" value="1"/>
</dbReference>
<dbReference type="PROSITE" id="PS50126">
    <property type="entry name" value="S1"/>
    <property type="match status" value="1"/>
</dbReference>
<reference key="1">
    <citation type="journal article" date="2006" name="J. Bacteriol.">
        <title>Pathogenomic sequence analysis of Bacillus cereus and Bacillus thuringiensis isolates closely related to Bacillus anthracis.</title>
        <authorList>
            <person name="Han C.S."/>
            <person name="Xie G."/>
            <person name="Challacombe J.F."/>
            <person name="Altherr M.R."/>
            <person name="Bhotika S.S."/>
            <person name="Bruce D."/>
            <person name="Campbell C.S."/>
            <person name="Campbell M.L."/>
            <person name="Chen J."/>
            <person name="Chertkov O."/>
            <person name="Cleland C."/>
            <person name="Dimitrijevic M."/>
            <person name="Doggett N.A."/>
            <person name="Fawcett J.J."/>
            <person name="Glavina T."/>
            <person name="Goodwin L.A."/>
            <person name="Hill K.K."/>
            <person name="Hitchcock P."/>
            <person name="Jackson P.J."/>
            <person name="Keim P."/>
            <person name="Kewalramani A.R."/>
            <person name="Longmire J."/>
            <person name="Lucas S."/>
            <person name="Malfatti S."/>
            <person name="McMurry K."/>
            <person name="Meincke L.J."/>
            <person name="Misra M."/>
            <person name="Moseman B.L."/>
            <person name="Mundt M."/>
            <person name="Munk A.C."/>
            <person name="Okinaka R.T."/>
            <person name="Parson-Quintana B."/>
            <person name="Reilly L.P."/>
            <person name="Richardson P."/>
            <person name="Robinson D.L."/>
            <person name="Rubin E."/>
            <person name="Saunders E."/>
            <person name="Tapia R."/>
            <person name="Tesmer J.G."/>
            <person name="Thayer N."/>
            <person name="Thompson L.S."/>
            <person name="Tice H."/>
            <person name="Ticknor L.O."/>
            <person name="Wills P.L."/>
            <person name="Brettin T.S."/>
            <person name="Gilna P."/>
        </authorList>
    </citation>
    <scope>NUCLEOTIDE SEQUENCE [LARGE SCALE GENOMIC DNA]</scope>
    <source>
        <strain>97-27</strain>
    </source>
</reference>
<accession>Q6HF08</accession>
<name>PNP_BACHK</name>